<accession>Q09680</accession>
<comment type="subcellular location">
    <subcellularLocation>
        <location evidence="2">Membrane</location>
        <topology evidence="2">Single-pass membrane protein</topology>
    </subcellularLocation>
</comment>
<comment type="similarity">
    <text evidence="2">To S.pombe SpBC4C3.08 and SpBC4C3.09.</text>
</comment>
<reference key="1">
    <citation type="journal article" date="2002" name="Nature">
        <title>The genome sequence of Schizosaccharomyces pombe.</title>
        <authorList>
            <person name="Wood V."/>
            <person name="Gwilliam R."/>
            <person name="Rajandream M.A."/>
            <person name="Lyne M.H."/>
            <person name="Lyne R."/>
            <person name="Stewart A."/>
            <person name="Sgouros J.G."/>
            <person name="Peat N."/>
            <person name="Hayles J."/>
            <person name="Baker S.G."/>
            <person name="Basham D."/>
            <person name="Bowman S."/>
            <person name="Brooks K."/>
            <person name="Brown D."/>
            <person name="Brown S."/>
            <person name="Chillingworth T."/>
            <person name="Churcher C.M."/>
            <person name="Collins M."/>
            <person name="Connor R."/>
            <person name="Cronin A."/>
            <person name="Davis P."/>
            <person name="Feltwell T."/>
            <person name="Fraser A."/>
            <person name="Gentles S."/>
            <person name="Goble A."/>
            <person name="Hamlin N."/>
            <person name="Harris D.E."/>
            <person name="Hidalgo J."/>
            <person name="Hodgson G."/>
            <person name="Holroyd S."/>
            <person name="Hornsby T."/>
            <person name="Howarth S."/>
            <person name="Huckle E.J."/>
            <person name="Hunt S."/>
            <person name="Jagels K."/>
            <person name="James K.D."/>
            <person name="Jones L."/>
            <person name="Jones M."/>
            <person name="Leather S."/>
            <person name="McDonald S."/>
            <person name="McLean J."/>
            <person name="Mooney P."/>
            <person name="Moule S."/>
            <person name="Mungall K.L."/>
            <person name="Murphy L.D."/>
            <person name="Niblett D."/>
            <person name="Odell C."/>
            <person name="Oliver K."/>
            <person name="O'Neil S."/>
            <person name="Pearson D."/>
            <person name="Quail M.A."/>
            <person name="Rabbinowitsch E."/>
            <person name="Rutherford K.M."/>
            <person name="Rutter S."/>
            <person name="Saunders D."/>
            <person name="Seeger K."/>
            <person name="Sharp S."/>
            <person name="Skelton J."/>
            <person name="Simmonds M.N."/>
            <person name="Squares R."/>
            <person name="Squares S."/>
            <person name="Stevens K."/>
            <person name="Taylor K."/>
            <person name="Taylor R.G."/>
            <person name="Tivey A."/>
            <person name="Walsh S.V."/>
            <person name="Warren T."/>
            <person name="Whitehead S."/>
            <person name="Woodward J.R."/>
            <person name="Volckaert G."/>
            <person name="Aert R."/>
            <person name="Robben J."/>
            <person name="Grymonprez B."/>
            <person name="Weltjens I."/>
            <person name="Vanstreels E."/>
            <person name="Rieger M."/>
            <person name="Schaefer M."/>
            <person name="Mueller-Auer S."/>
            <person name="Gabel C."/>
            <person name="Fuchs M."/>
            <person name="Duesterhoeft A."/>
            <person name="Fritzc C."/>
            <person name="Holzer E."/>
            <person name="Moestl D."/>
            <person name="Hilbert H."/>
            <person name="Borzym K."/>
            <person name="Langer I."/>
            <person name="Beck A."/>
            <person name="Lehrach H."/>
            <person name="Reinhardt R."/>
            <person name="Pohl T.M."/>
            <person name="Eger P."/>
            <person name="Zimmermann W."/>
            <person name="Wedler H."/>
            <person name="Wambutt R."/>
            <person name="Purnelle B."/>
            <person name="Goffeau A."/>
            <person name="Cadieu E."/>
            <person name="Dreano S."/>
            <person name="Gloux S."/>
            <person name="Lelaure V."/>
            <person name="Mottier S."/>
            <person name="Galibert F."/>
            <person name="Aves S.J."/>
            <person name="Xiang Z."/>
            <person name="Hunt C."/>
            <person name="Moore K."/>
            <person name="Hurst S.M."/>
            <person name="Lucas M."/>
            <person name="Rochet M."/>
            <person name="Gaillardin C."/>
            <person name="Tallada V.A."/>
            <person name="Garzon A."/>
            <person name="Thode G."/>
            <person name="Daga R.R."/>
            <person name="Cruzado L."/>
            <person name="Jimenez J."/>
            <person name="Sanchez M."/>
            <person name="del Rey F."/>
            <person name="Benito J."/>
            <person name="Dominguez A."/>
            <person name="Revuelta J.L."/>
            <person name="Moreno S."/>
            <person name="Armstrong J."/>
            <person name="Forsburg S.L."/>
            <person name="Cerutti L."/>
            <person name="Lowe T."/>
            <person name="McCombie W.R."/>
            <person name="Paulsen I."/>
            <person name="Potashkin J."/>
            <person name="Shpakovski G.V."/>
            <person name="Ussery D."/>
            <person name="Barrell B.G."/>
            <person name="Nurse P."/>
        </authorList>
    </citation>
    <scope>NUCLEOTIDE SEQUENCE [LARGE SCALE GENOMIC DNA]</scope>
    <source>
        <strain>972 / ATCC 24843</strain>
    </source>
</reference>
<protein>
    <recommendedName>
        <fullName>Uncharacterized protein C5H10.12c</fullName>
    </recommendedName>
</protein>
<keyword id="KW-0472">Membrane</keyword>
<keyword id="KW-1185">Reference proteome</keyword>
<keyword id="KW-0812">Transmembrane</keyword>
<keyword id="KW-1133">Transmembrane helix</keyword>
<sequence>MSRISLSNFLSLPRYKFLLFSVVLIIVMTTLVFNGHDYKQTLNDRLTSLKNNFVEENDNAVLKEEPGKYTYMSLFTMPSTEEDYYFNATRVLIHRLKYHPTTKSKYPIHILALRGVDEWKIERFRKDGASVIVIDPIASSDIVYDTSSFSQEISARYEQMFSKLRIFEQIQFDKICVIDSDILIMKNIDDIFDTPYMYQQINTLNYTRLPSYTKPDDDTVYHFNEDFKEYGASRSEFYPYLLAAVSDRGEHHSIPPEDTPYFNAGLMLIRPSELHFNRILKIGRFPYMYENAKMMEQSLLNLAFSLDGWFPWTRLDPYYNGVWPSIDERPLLKTAHGKFWNIGSSEFAPVYLADWYAAYGEMLSFHKYETH</sequence>
<dbReference type="EMBL" id="CU329670">
    <property type="protein sequence ID" value="CAA89962.1"/>
    <property type="molecule type" value="Genomic_DNA"/>
</dbReference>
<dbReference type="PIR" id="T38976">
    <property type="entry name" value="S55490"/>
</dbReference>
<dbReference type="SMR" id="Q09680"/>
<dbReference type="BioGRID" id="278218">
    <property type="interactions" value="11"/>
</dbReference>
<dbReference type="FunCoup" id="Q09680">
    <property type="interactions" value="842"/>
</dbReference>
<dbReference type="STRING" id="284812.Q09680"/>
<dbReference type="CAZy" id="GT8">
    <property type="family name" value="Glycosyltransferase Family 8"/>
</dbReference>
<dbReference type="PaxDb" id="4896-SPAC5H10.12c.1"/>
<dbReference type="EnsemblFungi" id="SPAC5H10.12c.1">
    <property type="protein sequence ID" value="SPAC5H10.12c.1:pep"/>
    <property type="gene ID" value="SPAC5H10.12c"/>
</dbReference>
<dbReference type="KEGG" id="spo:2541724"/>
<dbReference type="PomBase" id="SPAC5H10.12c"/>
<dbReference type="VEuPathDB" id="FungiDB:SPAC5H10.12c"/>
<dbReference type="eggNOG" id="KOG1950">
    <property type="taxonomic scope" value="Eukaryota"/>
</dbReference>
<dbReference type="HOGENOM" id="CLU_048469_1_1_1"/>
<dbReference type="InParanoid" id="Q09680"/>
<dbReference type="OMA" id="KSKYPIH"/>
<dbReference type="PhylomeDB" id="Q09680"/>
<dbReference type="Reactome" id="R-SPO-6798695">
    <property type="pathway name" value="Neutrophil degranulation"/>
</dbReference>
<dbReference type="Reactome" id="R-SPO-70221">
    <property type="pathway name" value="Glycogen breakdown (glycogenolysis)"/>
</dbReference>
<dbReference type="PRO" id="PR:Q09680"/>
<dbReference type="Proteomes" id="UP000002485">
    <property type="component" value="Chromosome I"/>
</dbReference>
<dbReference type="GO" id="GO:0005737">
    <property type="term" value="C:cytoplasm"/>
    <property type="evidence" value="ECO:0007005"/>
    <property type="project" value="PomBase"/>
</dbReference>
<dbReference type="GO" id="GO:0005794">
    <property type="term" value="C:Golgi apparatus"/>
    <property type="evidence" value="ECO:0000314"/>
    <property type="project" value="PomBase"/>
</dbReference>
<dbReference type="GO" id="GO:0016020">
    <property type="term" value="C:membrane"/>
    <property type="evidence" value="ECO:0007669"/>
    <property type="project" value="UniProtKB-SubCell"/>
</dbReference>
<dbReference type="GO" id="GO:0001962">
    <property type="term" value="F:alpha-1,3-galactosyltransferase activity"/>
    <property type="evidence" value="ECO:0000269"/>
    <property type="project" value="PomBase"/>
</dbReference>
<dbReference type="GO" id="GO:0016757">
    <property type="term" value="F:glycosyltransferase activity"/>
    <property type="evidence" value="ECO:0000318"/>
    <property type="project" value="GO_Central"/>
</dbReference>
<dbReference type="GO" id="GO:0006487">
    <property type="term" value="P:protein N-linked glycosylation"/>
    <property type="evidence" value="ECO:0000316"/>
    <property type="project" value="PomBase"/>
</dbReference>
<dbReference type="GO" id="GO:0006493">
    <property type="term" value="P:protein O-linked glycosylation"/>
    <property type="evidence" value="ECO:0000269"/>
    <property type="project" value="PomBase"/>
</dbReference>
<dbReference type="Gene3D" id="3.90.550.10">
    <property type="entry name" value="Spore Coat Polysaccharide Biosynthesis Protein SpsA, Chain A"/>
    <property type="match status" value="1"/>
</dbReference>
<dbReference type="InterPro" id="IPR002495">
    <property type="entry name" value="Glyco_trans_8"/>
</dbReference>
<dbReference type="InterPro" id="IPR050587">
    <property type="entry name" value="GNT1/Glycosyltrans_8"/>
</dbReference>
<dbReference type="InterPro" id="IPR029044">
    <property type="entry name" value="Nucleotide-diphossugar_trans"/>
</dbReference>
<dbReference type="PANTHER" id="PTHR11183">
    <property type="entry name" value="GLYCOGENIN SUBFAMILY MEMBER"/>
    <property type="match status" value="1"/>
</dbReference>
<dbReference type="Pfam" id="PF01501">
    <property type="entry name" value="Glyco_transf_8"/>
    <property type="match status" value="1"/>
</dbReference>
<dbReference type="SUPFAM" id="SSF53448">
    <property type="entry name" value="Nucleotide-diphospho-sugar transferases"/>
    <property type="match status" value="1"/>
</dbReference>
<organism>
    <name type="scientific">Schizosaccharomyces pombe (strain 972 / ATCC 24843)</name>
    <name type="common">Fission yeast</name>
    <dbReference type="NCBI Taxonomy" id="284812"/>
    <lineage>
        <taxon>Eukaryota</taxon>
        <taxon>Fungi</taxon>
        <taxon>Dikarya</taxon>
        <taxon>Ascomycota</taxon>
        <taxon>Taphrinomycotina</taxon>
        <taxon>Schizosaccharomycetes</taxon>
        <taxon>Schizosaccharomycetales</taxon>
        <taxon>Schizosaccharomycetaceae</taxon>
        <taxon>Schizosaccharomyces</taxon>
    </lineage>
</organism>
<evidence type="ECO:0000255" key="1"/>
<evidence type="ECO:0000305" key="2"/>
<feature type="chain" id="PRO_0000116381" description="Uncharacterized protein C5H10.12c">
    <location>
        <begin position="1"/>
        <end position="371"/>
    </location>
</feature>
<feature type="transmembrane region" description="Helical" evidence="1">
    <location>
        <begin position="17"/>
        <end position="33"/>
    </location>
</feature>
<gene>
    <name type="ORF">SPAC5H10.12c</name>
</gene>
<name>YA0C_SCHPO</name>
<proteinExistence type="predicted"/>